<sequence>MAPLRKTYVLKLYVAGNTPNSVRALKTLNNILEKEFKGVYALKVIDVLKNPQLAEEDKILATPTLAKVLPPPVRRIIGDLSNREKVLIGLDLLYEEIGDQAEDDLGLE</sequence>
<keyword id="KW-0002">3D-structure</keyword>
<keyword id="KW-0090">Biological rhythms</keyword>
<keyword id="KW-1185">Reference proteome</keyword>
<dbReference type="EMBL" id="AB071375">
    <property type="protein sequence ID" value="BAB85984.1"/>
    <property type="molecule type" value="Genomic_DNA"/>
</dbReference>
<dbReference type="EMBL" id="BA000039">
    <property type="protein sequence ID" value="BAC08034.1"/>
    <property type="molecule type" value="Genomic_DNA"/>
</dbReference>
<dbReference type="RefSeq" id="NP_681272.1">
    <property type="nucleotide sequence ID" value="NC_004113.1"/>
</dbReference>
<dbReference type="RefSeq" id="WP_011056333.1">
    <property type="nucleotide sequence ID" value="NC_004113.1"/>
</dbReference>
<dbReference type="PDB" id="1VGL">
    <property type="method" value="X-ray"/>
    <property type="resolution" value="2.60 A"/>
    <property type="chains" value="A/B/C/D=1-108"/>
</dbReference>
<dbReference type="PDB" id="2QKE">
    <property type="method" value="X-ray"/>
    <property type="resolution" value="2.70 A"/>
    <property type="chains" value="A/B/C/D/E/F=1-108"/>
</dbReference>
<dbReference type="PDB" id="5JWO">
    <property type="method" value="X-ray"/>
    <property type="resolution" value="1.80 A"/>
    <property type="chains" value="B=1-99"/>
</dbReference>
<dbReference type="PDB" id="5JWQ">
    <property type="method" value="X-ray"/>
    <property type="resolution" value="3.87 A"/>
    <property type="chains" value="B/D=1-99"/>
</dbReference>
<dbReference type="PDB" id="5JWR">
    <property type="method" value="X-ray"/>
    <property type="resolution" value="2.61 A"/>
    <property type="chains" value="B/D=1-99"/>
</dbReference>
<dbReference type="PDB" id="5JYT">
    <property type="method" value="NMR"/>
    <property type="chains" value="A=1-99"/>
</dbReference>
<dbReference type="PDB" id="5JYV">
    <property type="method" value="NMR"/>
    <property type="chains" value="B=1-99"/>
</dbReference>
<dbReference type="PDBsum" id="1VGL"/>
<dbReference type="PDBsum" id="2QKE"/>
<dbReference type="PDBsum" id="5JWO"/>
<dbReference type="PDBsum" id="5JWQ"/>
<dbReference type="PDBsum" id="5JWR"/>
<dbReference type="PDBsum" id="5JYT"/>
<dbReference type="PDBsum" id="5JYV"/>
<dbReference type="SMR" id="Q79V61"/>
<dbReference type="DIP" id="DIP-29356N"/>
<dbReference type="IntAct" id="Q79V61">
    <property type="interactions" value="1"/>
</dbReference>
<dbReference type="MINT" id="Q79V61"/>
<dbReference type="STRING" id="197221.gene:10747071"/>
<dbReference type="EnsemblBacteria" id="BAC08034">
    <property type="protein sequence ID" value="BAC08034"/>
    <property type="gene ID" value="BAC08034"/>
</dbReference>
<dbReference type="KEGG" id="tel:tlr0482"/>
<dbReference type="PATRIC" id="fig|197221.4.peg.507"/>
<dbReference type="eggNOG" id="COG4251">
    <property type="taxonomic scope" value="Bacteria"/>
</dbReference>
<dbReference type="EvolutionaryTrace" id="Q79V61"/>
<dbReference type="Proteomes" id="UP000000440">
    <property type="component" value="Chromosome"/>
</dbReference>
<dbReference type="GO" id="GO:0007623">
    <property type="term" value="P:circadian rhythm"/>
    <property type="evidence" value="ECO:0007669"/>
    <property type="project" value="UniProtKB-UniRule"/>
</dbReference>
<dbReference type="CDD" id="cd02978">
    <property type="entry name" value="KaiB_like"/>
    <property type="match status" value="1"/>
</dbReference>
<dbReference type="FunFam" id="3.40.30.10:FF:000180">
    <property type="entry name" value="Circadian clock protein KaiB"/>
    <property type="match status" value="1"/>
</dbReference>
<dbReference type="Gene3D" id="3.40.30.10">
    <property type="entry name" value="Glutaredoxin"/>
    <property type="match status" value="1"/>
</dbReference>
<dbReference type="HAMAP" id="MF_01835">
    <property type="entry name" value="KaiB"/>
    <property type="match status" value="1"/>
</dbReference>
<dbReference type="InterPro" id="IPR013474">
    <property type="entry name" value="Circ_KaiB"/>
</dbReference>
<dbReference type="InterPro" id="IPR039022">
    <property type="entry name" value="KaiB-like"/>
</dbReference>
<dbReference type="InterPro" id="IPR011649">
    <property type="entry name" value="KaiB_domain"/>
</dbReference>
<dbReference type="InterPro" id="IPR036249">
    <property type="entry name" value="Thioredoxin-like_sf"/>
</dbReference>
<dbReference type="NCBIfam" id="TIGR02654">
    <property type="entry name" value="circ_KaiB"/>
    <property type="match status" value="1"/>
</dbReference>
<dbReference type="NCBIfam" id="NF006798">
    <property type="entry name" value="PRK09301.1"/>
    <property type="match status" value="1"/>
</dbReference>
<dbReference type="PANTHER" id="PTHR41709:SF2">
    <property type="entry name" value="CIRCADIAN CLOCK PROTEIN KAIB2"/>
    <property type="match status" value="1"/>
</dbReference>
<dbReference type="PANTHER" id="PTHR41709">
    <property type="entry name" value="KAIB-LIKE PROTEIN 1"/>
    <property type="match status" value="1"/>
</dbReference>
<dbReference type="Pfam" id="PF07689">
    <property type="entry name" value="KaiB"/>
    <property type="match status" value="1"/>
</dbReference>
<dbReference type="SMART" id="SM01248">
    <property type="entry name" value="KaiB"/>
    <property type="match status" value="1"/>
</dbReference>
<dbReference type="SUPFAM" id="SSF52833">
    <property type="entry name" value="Thioredoxin-like"/>
    <property type="match status" value="1"/>
</dbReference>
<protein>
    <recommendedName>
        <fullName evidence="1 7">Circadian clock oscillator protein KaiB</fullName>
    </recommendedName>
</protein>
<gene>
    <name evidence="1 7" type="primary">kaiB</name>
    <name type="ordered locus">tlr0482</name>
</gene>
<accession>Q79V61</accession>
<accession>Q8RR34</accession>
<feature type="chain" id="PRO_0000217765" description="Circadian clock oscillator protein KaiB">
    <location>
        <begin position="1"/>
        <end position="108"/>
    </location>
</feature>
<feature type="mutagenesis site" description="Enhances KaiB(fs); when associated with 89-ALR-91 and A-94." evidence="6">
    <original>Y</original>
    <variation>A</variation>
    <location>
        <position position="8"/>
    </location>
</feature>
<feature type="mutagenesis site" description="Loss of circadian rhythm." evidence="2">
    <original>K</original>
    <variation>A</variation>
    <location>
        <position position="11"/>
    </location>
</feature>
<feature type="mutagenesis site" description="Increases binding to CikA; when associated with A-8, 89-ALR-91 and A-94." evidence="6">
    <original>N</original>
    <variation>A</variation>
    <location>
        <position position="29"/>
    </location>
</feature>
<feature type="mutagenesis site" description="No longer binds CikA." evidence="6">
    <original>E</original>
    <variation>A</variation>
    <location>
        <position position="33"/>
    </location>
</feature>
<feature type="mutagenesis site" description="No longer binds KaiA or CikA." evidence="6">
    <original>A</original>
    <variation>D</variation>
    <location>
        <position position="41"/>
    </location>
</feature>
<feature type="mutagenesis site" description="Loss of circadian rhythm." evidence="2">
    <original>K</original>
    <variation>A</variation>
    <location>
        <position position="43"/>
    </location>
</feature>
<feature type="mutagenesis site" description="No longer binds KaiA or CikA." evidence="6">
    <original>K</original>
    <variation>E</variation>
    <location>
        <position position="43"/>
    </location>
</feature>
<feature type="mutagenesis site" description="Loss of circadian rhythm." evidence="2">
    <original>K</original>
    <variation>A</variation>
    <location>
        <position position="58"/>
    </location>
</feature>
<feature type="mutagenesis site" description="Circadian rhythm strongly weakened and destabilized." evidence="2">
    <original>K</original>
    <variation>A</variation>
    <location>
        <position position="67"/>
    </location>
</feature>
<feature type="mutagenesis site" description="Enhances KaiB(fs) form. Further enhancement; when associated with A-8 and A-94." evidence="5 6">
    <original>GLD</original>
    <variation>ALR</variation>
    <location>
        <begin position="89"/>
        <end position="91"/>
    </location>
</feature>
<feature type="mutagenesis site" description="Enhances KaiB(fs); when associated with A-8 and 89-ALR-91." evidence="6">
    <original>Y</original>
    <variation>A</variation>
    <location>
        <position position="94"/>
    </location>
</feature>
<feature type="strand" evidence="24">
    <location>
        <begin position="8"/>
        <end position="14"/>
    </location>
</feature>
<feature type="helix" evidence="24">
    <location>
        <begin position="19"/>
        <end position="33"/>
    </location>
</feature>
<feature type="turn" evidence="24">
    <location>
        <begin position="34"/>
        <end position="39"/>
    </location>
</feature>
<feature type="strand" evidence="24">
    <location>
        <begin position="40"/>
        <end position="46"/>
    </location>
</feature>
<feature type="turn" evidence="24">
    <location>
        <begin position="47"/>
        <end position="49"/>
    </location>
</feature>
<feature type="helix" evidence="24">
    <location>
        <begin position="51"/>
        <end position="57"/>
    </location>
</feature>
<feature type="strand" evidence="23">
    <location>
        <begin position="58"/>
        <end position="60"/>
    </location>
</feature>
<feature type="strand" evidence="24">
    <location>
        <begin position="61"/>
        <end position="72"/>
    </location>
</feature>
<feature type="strand" evidence="24">
    <location>
        <begin position="74"/>
        <end position="78"/>
    </location>
</feature>
<feature type="helix" evidence="24">
    <location>
        <begin position="83"/>
        <end position="93"/>
    </location>
</feature>
<name>KAIB_THEVB</name>
<evidence type="ECO:0000255" key="1">
    <source>
        <dbReference type="HAMAP-Rule" id="MF_01835"/>
    </source>
</evidence>
<evidence type="ECO:0000269" key="2">
    <source>
    </source>
</evidence>
<evidence type="ECO:0000269" key="3">
    <source>
    </source>
</evidence>
<evidence type="ECO:0000269" key="4">
    <source>
    </source>
</evidence>
<evidence type="ECO:0000269" key="5">
    <source>
    </source>
</evidence>
<evidence type="ECO:0000269" key="6">
    <source>
    </source>
</evidence>
<evidence type="ECO:0000303" key="7">
    <source ref="1"/>
</evidence>
<evidence type="ECO:0000305" key="8">
    <source>
    </source>
</evidence>
<evidence type="ECO:0000312" key="9">
    <source>
        <dbReference type="EMBL" id="BAB85984.1"/>
    </source>
</evidence>
<evidence type="ECO:0000312" key="10">
    <source>
        <dbReference type="EMBL" id="BAC08034.1"/>
    </source>
</evidence>
<evidence type="ECO:0000312" key="11">
    <source>
        <dbReference type="PDB" id="5JWO"/>
    </source>
</evidence>
<evidence type="ECO:0000312" key="12">
    <source>
        <dbReference type="PDB" id="5JWQ"/>
    </source>
</evidence>
<evidence type="ECO:0000312" key="13">
    <source>
        <dbReference type="PDB" id="5JWR"/>
    </source>
</evidence>
<evidence type="ECO:0000312" key="14">
    <source>
        <dbReference type="PDB" id="5JYT"/>
    </source>
</evidence>
<evidence type="ECO:0000312" key="15">
    <source>
        <dbReference type="PDB" id="5JYV"/>
    </source>
</evidence>
<evidence type="ECO:0007744" key="16">
    <source>
        <dbReference type="PDB" id="1VGL"/>
    </source>
</evidence>
<evidence type="ECO:0007744" key="17">
    <source>
        <dbReference type="PDB" id="2QKE"/>
    </source>
</evidence>
<evidence type="ECO:0007744" key="18">
    <source>
        <dbReference type="PDB" id="5JWO"/>
    </source>
</evidence>
<evidence type="ECO:0007744" key="19">
    <source>
        <dbReference type="PDB" id="5JWQ"/>
    </source>
</evidence>
<evidence type="ECO:0007744" key="20">
    <source>
        <dbReference type="PDB" id="5JWR"/>
    </source>
</evidence>
<evidence type="ECO:0007744" key="21">
    <source>
        <dbReference type="PDB" id="5JYT"/>
    </source>
</evidence>
<evidence type="ECO:0007744" key="22">
    <source>
        <dbReference type="PDB" id="5JYV"/>
    </source>
</evidence>
<evidence type="ECO:0007829" key="23">
    <source>
        <dbReference type="PDB" id="1VGL"/>
    </source>
</evidence>
<evidence type="ECO:0007829" key="24">
    <source>
        <dbReference type="PDB" id="5JWO"/>
    </source>
</evidence>
<comment type="function">
    <text evidence="2 4 5 6">Key component of the KaiABC oscillator complex, which constitutes the main circadian regulator in cyanobacteria (PubMed:16227211, PubMed:24112939, PubMed:28302851). Its composition changes during the circadian cycle to control KaiC phosphorylation. KaiA stimulates KaiC autophosphorylation, while KaiB sequesters KaiA, leading to KaiC autodephosphorylation. KaiA binding to KaiC yields KaiA(2-4):KaiC(6) complexes which stimulate KaiC autophosphorylation. Phospho-Ser-431 KaiC accumulation triggers binding of KaiB to form the KaiB(6):KaiC(6) complex, leading to changes in the output regulators CikA and SasA (PubMed:28302851). KaiB switches to a thioredoxin-like fold (KaiB(fs)) in complex with KaiC (PubMed:26113641, PubMed:28302851). KaiB(6):KaiC(6) formation exposes a site for KaiA binding that sequesters KaiA from the CII domain, making the KaiC(6):KaiB(6):KaiA(12) complex that results in KaiC autodephosphorylation. Complete dephosphorylation of KaiC leads to dissociation of KaiA(2):KaiB(1), completing 1 cycle of the Kai oscillator (PubMed:28302851).</text>
</comment>
<comment type="function">
    <text evidence="1 5 6">A metamorphic protein which reversibly switches between an inactive tetrameric fold and a rare, thioredoxin-like monomeric fold (KaiB(fs)). KaiB(fs) binds phospho-KaiC, KaiA and CikA. KaiA and CikA compete for binding to KaiB(fs), and KaiB(fs) and SasA compete for binding to KaiC, thus the clock oscillator and output signal pathway are tightly coupled.</text>
</comment>
<comment type="biophysicochemical properties">
    <phDependence>
        <text evidence="2">Stable from pH 4.0 to 10.</text>
    </phDependence>
    <temperatureDependence>
        <text evidence="2">Stable from 4 to 40 degrees Celsius.</text>
    </temperatureDependence>
</comment>
<comment type="subunit">
    <text evidence="2 3 4 5 6 11 12 13 14 15 16 17">Undergoes a major conformational rearrangment; in the free state forms homotetramers with 2 dimers (PubMed:16227211, PubMed:18497745). When bound to the CI domain of KaiC, KaiA or CikA switches to a monomeric thioredoxin-fold (KaiB(fs)) (PubMed:26113641, PubMed:28302851). The KaiABC complex composition changes during the circadian cycle to control KaiC phosphorylation. Complexes KaiC(6), KaiA(2-4):KaiC(6), KaiB(6):KaiC(6) and KaiC(6):KaiB(6):KaiA(12) are among the most important forms, many form cooperatively (PubMed:28302851). Binds to KaiA; 1 KaiB(fs) binds to the KaiA homodimer. Binds to the B-loop in the CI domain of KaiC; SasA and KaiB compete to bind to the CI domain (PubMed:24112939). Binding to KaiC CI domain occurs 1:1 (PubMed:26113641, PubMed:28302851). KaiA and CikA bind to the same region of KaiB(fs) and therefore compete (PubMed:28302851).</text>
</comment>
<comment type="interaction">
    <interactant intactId="EBI-7570699">
        <id>Q79V61</id>
    </interactant>
    <interactant intactId="EBI-701595">
        <id>Q79V60</id>
        <label>kaiC</label>
    </interactant>
    <organismsDiffer>false</organismsDiffer>
    <experiments>6</experiments>
</comment>
<comment type="domain">
    <text evidence="2 5 6 8">Has 2 forms, fold switches to a thioredoxin-like fold (KaiB(fs)) when bound to KaiC, KaiA or CikA (PubMed:26113641, PubMed:28302851). The KaiB(fs) form binds faster to KaiC than its alternate form, so less fully phosphorylated KaiC forms; the KaiB(fs) form activates signaling through CikA and inhibits signaling through SasA (Probable) (PubMed:26113641). The C-terminal region may confer species specificity; C-terminal hybrids do not all rescue deletions in S.elongatus PCC 7942 (PubMed:16227211).</text>
</comment>
<comment type="similarity">
    <text evidence="1">Belongs to the KaiB family.</text>
</comment>
<proteinExistence type="evidence at protein level"/>
<reference evidence="9" key="1">
    <citation type="submission" date="2001-09" db="EMBL/GenBank/DDBJ databases">
        <title>Circadian clock gene cluster kaiABC in Synechococcus elongatus.</title>
        <authorList>
            <person name="Uzumaki T."/>
            <person name="Hayashi F."/>
            <person name="Onai K."/>
            <person name="Ishiura M."/>
        </authorList>
    </citation>
    <scope>NUCLEOTIDE SEQUENCE [GENOMIC DNA]</scope>
    <source>
        <strain>NIES-2133 / IAM M-273 / BP-1</strain>
    </source>
</reference>
<reference evidence="10" key="2">
    <citation type="journal article" date="2002" name="DNA Res.">
        <title>Complete genome structure of the thermophilic cyanobacterium Thermosynechococcus elongatus BP-1.</title>
        <authorList>
            <person name="Nakamura Y."/>
            <person name="Kaneko T."/>
            <person name="Sato S."/>
            <person name="Ikeuchi M."/>
            <person name="Katoh H."/>
            <person name="Sasamoto S."/>
            <person name="Watanabe A."/>
            <person name="Iriguchi M."/>
            <person name="Kawashima K."/>
            <person name="Kimura T."/>
            <person name="Kishida Y."/>
            <person name="Kiyokawa C."/>
            <person name="Kohara M."/>
            <person name="Matsumoto M."/>
            <person name="Matsuno A."/>
            <person name="Nakazaki N."/>
            <person name="Shimpo S."/>
            <person name="Sugimoto M."/>
            <person name="Takeuchi C."/>
            <person name="Yamada M."/>
            <person name="Tabata S."/>
        </authorList>
    </citation>
    <scope>NUCLEOTIDE SEQUENCE [LARGE SCALE GENOMIC DNA]</scope>
    <source>
        <strain>NIES-2133 / IAM M-273 / BP-1</strain>
    </source>
</reference>
<reference key="3">
    <citation type="journal article" date="2014" name="J. Mol. Biol.">
        <title>Cooperative KaiA-KaiB-KaiC interactions affect KaiB/SasA competition in the circadian clock of cyanobacteria.</title>
        <authorList>
            <person name="Tseng R."/>
            <person name="Chang Y.G."/>
            <person name="Bravo I."/>
            <person name="Latham R."/>
            <person name="Chaudhary A."/>
            <person name="Kuo N.W."/>
            <person name="Liwang A."/>
        </authorList>
    </citation>
    <scope>FUNCTION</scope>
    <scope>SUBUNIT</scope>
    <source>
        <strain>NIES-2133 / IAM M-273 / BP-1</strain>
    </source>
</reference>
<reference key="4">
    <citation type="journal article" date="2015" name="Science">
        <title>Circadian rhythms. A protein fold switch joins the circadian oscillator to clock output in cyanobacteria.</title>
        <authorList>
            <person name="Chang Y.G."/>
            <person name="Cohen S.E."/>
            <person name="Phong C."/>
            <person name="Myers W.K."/>
            <person name="Kim Y.I."/>
            <person name="Tseng R."/>
            <person name="Lin J."/>
            <person name="Zhang L."/>
            <person name="Boyd J.S."/>
            <person name="Lee Y."/>
            <person name="Kang S."/>
            <person name="Lee D."/>
            <person name="Li S."/>
            <person name="Britt R.D."/>
            <person name="Rust M.J."/>
            <person name="Golden S.S."/>
            <person name="LiWang A."/>
        </authorList>
    </citation>
    <scope>SUBUNIT</scope>
    <scope>FOLD-SWITCH</scope>
    <scope>DOMAIN</scope>
    <scope>MUTAGENESIS OF 89-GLY--ASP-91</scope>
    <source>
        <strain>NIES-2133 / IAM M-273 / BP-1</strain>
    </source>
</reference>
<reference evidence="16" key="5">
    <citation type="journal article" date="2005" name="J. Biol. Chem.">
        <title>Functionally important substructures of circadian clock protein KaiB in a unique tetramer complex.</title>
        <authorList>
            <person name="Iwase R."/>
            <person name="Imada K."/>
            <person name="Hayashi F."/>
            <person name="Uzumaki T."/>
            <person name="Morishita M."/>
            <person name="Onai K."/>
            <person name="Furukawa Y."/>
            <person name="Namba K."/>
            <person name="Ishiura M."/>
        </authorList>
    </citation>
    <scope>X-RAY CRYSTALLOGRAPHY (2.60 ANGSTROMS)</scope>
    <scope>FUNCTION</scope>
    <scope>BIOPHYSICOCHEMICAL PROPERTIES</scope>
    <scope>SUBUNIT</scope>
    <scope>DOMAIN</scope>
    <scope>MUTAGENESIS OF LYS-11; LYS-43; LYS-58 AND LYS-67</scope>
    <source>
        <strain>NIES-2133 / IAM M-273 / BP-1</strain>
    </source>
</reference>
<reference evidence="17" key="6">
    <citation type="journal article" date="2008" name="EMBO J.">
        <title>Structural model of the circadian clock KaiB-KaiC complex and mechanism for modulation of KaiC phosphorylation.</title>
        <authorList>
            <person name="Pattanayek R."/>
            <person name="Williams D.R."/>
            <person name="Pattanayek S."/>
            <person name="Mori T."/>
            <person name="Johnson C.H."/>
            <person name="Stewart P.L."/>
            <person name="Egli M."/>
        </authorList>
    </citation>
    <scope>X-RAY CRYSTALLOGRAPHY (2.70 ANGSTROMS)</scope>
    <scope>SUBUNIT</scope>
    <scope>INTERACTION WITH KAIC</scope>
    <source>
        <strain>NIES-2133 / IAM M-273 / BP-1</strain>
    </source>
</reference>
<reference evidence="18 19 20 21 22" key="7">
    <citation type="journal article" date="2017" name="Science">
        <title>Structural basis of the day-night transition in a bacterial circadian clock.</title>
        <authorList>
            <person name="Tseng R."/>
            <person name="Goularte N.F."/>
            <person name="Chavan A."/>
            <person name="Luu J."/>
            <person name="Cohen S.E."/>
            <person name="Chang Y.G."/>
            <person name="Heisler J."/>
            <person name="Li S."/>
            <person name="Michael A.K."/>
            <person name="Tripathi S."/>
            <person name="Golden S.S."/>
            <person name="LiWang A."/>
            <person name="Partch C.L."/>
        </authorList>
    </citation>
    <scope>STRUCTURE BY NMR OF 1-99 IN COMPLEX WITH CIKA C-TERMINUS</scope>
    <scope>X-RAY CRYSTALLOGRAPHY (1.80 ANGSTROMS) OF 1-99 IN COMPLEX WITH KAIC CI DOMAIN</scope>
    <scope>X-RAY CRYSTALLOGRAPHY (2.61 ANGSTROMS) OF 1-99 IN KAIABC COMPLEX</scope>
    <scope>FUNCTION</scope>
    <scope>SUBUNIT</scope>
    <scope>MUTAGENESIS OF TYR-8; ASN-29; GLU-33; ALA-41; LYS-43; 89-GLY--ASP-91 AND TYR-94</scope>
    <source>
        <strain>NIES-2133 / IAM M-273 / BP-1</strain>
    </source>
</reference>
<organism>
    <name type="scientific">Thermosynechococcus vestitus (strain NIES-2133 / IAM M-273 / BP-1)</name>
    <dbReference type="NCBI Taxonomy" id="197221"/>
    <lineage>
        <taxon>Bacteria</taxon>
        <taxon>Bacillati</taxon>
        <taxon>Cyanobacteriota</taxon>
        <taxon>Cyanophyceae</taxon>
        <taxon>Acaryochloridales</taxon>
        <taxon>Thermosynechococcaceae</taxon>
        <taxon>Thermosynechococcus</taxon>
    </lineage>
</organism>